<sequence length="513" mass="58506">MGFFIQHGLTKPEILYPFLFGIFAVASLCIATLLFPASFSAASRVISWVLSIYLEVKNPIRHTETGRNIPGPSYVWPNGQGDIEKYVQGRSRSEQWQRKYGNVYRIWAGMTPEVVLTRPEQLHAIFKDSDKHTKATNSDSGYFMSRILGQCLGLMAGPRWKLLKGIAAPPFMHPTAVRSIGRIQEHVRAHFHDLETNGNLREGRIHPVQDLKMLPFFIVAEANYGSLTPAMKSELDSLAPARENLMKFVLFGGLARFNISRFFPTEANRQLRRFRSQWRAFNRAAYERAREKHPSAMVVQMYDAVHKGVLTEEQVAQTMDETLYANLDVTTGGLSWNLVFLAANPACQARLHEEISALTPAEEEGYISRNGTYLAACVLESSRLRPALPFTIPQSAPTERVVDGYRIPAGTNYVVDTWGLNVRDEFWAPDNSTYRPERFLNSSNTDLRYHFWRFGFGPRQCIGRYTADVVIRAILLHLVKHYELQMLEEGDFTQDPECWITHPDLQVKCVRRT</sequence>
<protein>
    <recommendedName>
        <fullName evidence="6">Cytochrome P450 monooxygenase asaD</fullName>
        <ecNumber evidence="5">1.-.-.-</ecNumber>
    </recommendedName>
    <alternativeName>
        <fullName evidence="6">Aspergillic acid biosynthesis cluster protein D</fullName>
    </alternativeName>
</protein>
<comment type="function">
    <text evidence="5">Cytochrome P450 monooxygenase; part of the gene cluster that mediates the biosynthesis of aspergillic acid, a hydroxamic acid-containing pyrazinone with aliphatic side chains that originates from leucine (Leu) and isoleucine (Ile) (PubMed:29674152). Aspergillic acid has antibiotic properties and was shown to be lethal to mice (PubMed:29674152). The first step in the pathway is the production of deoxyaspergillic acid via a condensation between the Ile amine and the Leu carboxylic acid, followed by a reductive release from the protein forming the dipeptide aldehyde NH(2)-Leu-Ile-CHO, which could undergo an intermolecular cyclization resulting in a dihydropyrazinone (PubMed:29674152). As the NRPS asaC lacks a condensation domain, it is improbable that it is responsible for condensation of Leu and Ile (PubMed:29674152). One possibility is that asaC acts on a previously condensed dipeptide and functions as a Leu-Ile reductase to yield deoxyaspergillic acid (PubMed:29674152). After asaC forms deoxyaspergillic acid, the cytochrome P450 asaD oxidizes the pyrazinone to the hydroxamic acid-containing bioactive metabolite aspergillic acid (PubMed:29674152). The hydroxylase/desaturase asaB can then convert aspergillic acid to hydroxyaspergillic acid (PubMed:29674152). Both aspergillic acid and hydroxyaspergillic acid can form complexes with iron producing ferriaspergillin analogs (PubMed:29674152).</text>
</comment>
<comment type="cofactor">
    <cofactor evidence="1">
        <name>heme</name>
        <dbReference type="ChEBI" id="CHEBI:30413"/>
    </cofactor>
</comment>
<comment type="pathway">
    <text evidence="5">Secondary metabolite biosynthesis.</text>
</comment>
<comment type="subcellular location">
    <subcellularLocation>
        <location evidence="2">Membrane</location>
        <topology evidence="2">Single-pass membrane protein</topology>
    </subcellularLocation>
</comment>
<comment type="induction">
    <text evidence="4">Expressed during the earliest stages of maize kernel infection (PubMed:23834374).</text>
</comment>
<comment type="disruption phenotype">
    <text evidence="5">Blocks the production of aspergillic acid or ferriaspergillin, but accumulates the intermediate deoxyaspergillic acid (PubMed:29674152).</text>
</comment>
<comment type="similarity">
    <text evidence="7">Belongs to the cytochrome P450 family.</text>
</comment>
<organism>
    <name type="scientific">Aspergillus flavus (strain ATCC 200026 / FGSC A1120 / IAM 13836 / NRRL 3357 / JCM 12722 / SRRC 167)</name>
    <dbReference type="NCBI Taxonomy" id="332952"/>
    <lineage>
        <taxon>Eukaryota</taxon>
        <taxon>Fungi</taxon>
        <taxon>Dikarya</taxon>
        <taxon>Ascomycota</taxon>
        <taxon>Pezizomycotina</taxon>
        <taxon>Eurotiomycetes</taxon>
        <taxon>Eurotiomycetidae</taxon>
        <taxon>Eurotiales</taxon>
        <taxon>Aspergillaceae</taxon>
        <taxon>Aspergillus</taxon>
        <taxon>Aspergillus subgen. Circumdati</taxon>
    </lineage>
</organism>
<evidence type="ECO:0000250" key="1">
    <source>
        <dbReference type="UniProtKB" id="P04798"/>
    </source>
</evidence>
<evidence type="ECO:0000255" key="2"/>
<evidence type="ECO:0000255" key="3">
    <source>
        <dbReference type="PROSITE-ProRule" id="PRU00498"/>
    </source>
</evidence>
<evidence type="ECO:0000269" key="4">
    <source>
    </source>
</evidence>
<evidence type="ECO:0000269" key="5">
    <source>
    </source>
</evidence>
<evidence type="ECO:0000303" key="6">
    <source>
    </source>
</evidence>
<evidence type="ECO:0000305" key="7"/>
<gene>
    <name evidence="6" type="primary">asaD</name>
    <name type="ORF">AFLA_023030</name>
</gene>
<proteinExistence type="evidence at transcript level"/>
<keyword id="KW-0325">Glycoprotein</keyword>
<keyword id="KW-0349">Heme</keyword>
<keyword id="KW-0408">Iron</keyword>
<keyword id="KW-0472">Membrane</keyword>
<keyword id="KW-0479">Metal-binding</keyword>
<keyword id="KW-0503">Monooxygenase</keyword>
<keyword id="KW-0560">Oxidoreductase</keyword>
<keyword id="KW-0812">Transmembrane</keyword>
<keyword id="KW-1133">Transmembrane helix</keyword>
<name>ASAD_ASPFN</name>
<accession>B8N0E9</accession>
<reference key="1">
    <citation type="journal article" date="2015" name="Genome Announc.">
        <title>Genome sequence of Aspergillus flavus NRRL 3357, a strain that causes aflatoxin contamination of food and feed.</title>
        <authorList>
            <person name="Nierman W.C."/>
            <person name="Yu J."/>
            <person name="Fedorova-Abrams N.D."/>
            <person name="Losada L."/>
            <person name="Cleveland T.E."/>
            <person name="Bhatnagar D."/>
            <person name="Bennett J.W."/>
            <person name="Dean R."/>
            <person name="Payne G.A."/>
        </authorList>
    </citation>
    <scope>NUCLEOTIDE SEQUENCE [LARGE SCALE GENOMIC DNA]</scope>
    <source>
        <strain>ATCC 200026 / FGSC A1120 / IAM 13836 / NRRL 3357 / JCM 12722 / SRRC 167</strain>
    </source>
</reference>
<reference key="2">
    <citation type="journal article" date="2013" name="Mol. Plant Pathol.">
        <title>Localization, morphology and transcriptional profile of Aspergillus flavus during seed colonization.</title>
        <authorList>
            <person name="Dolezal A.L."/>
            <person name="Obrian G.R."/>
            <person name="Nielsen D.M."/>
            <person name="Woloshuk C.P."/>
            <person name="Boston R.S."/>
            <person name="Payne G.A."/>
        </authorList>
    </citation>
    <scope>IDENTIFICATION WITHIN THE CLUSTER</scope>
    <scope>INDUCTION</scope>
</reference>
<reference key="3">
    <citation type="journal article" date="2018" name="Fungal Genet. Biol.">
        <title>Identification and functional analysis of the aspergillic acid gene cluster in Aspergillus flavus.</title>
        <authorList>
            <person name="Lebar M.D."/>
            <person name="Cary J.W."/>
            <person name="Majumdar R."/>
            <person name="Carter-Wientjes C.H."/>
            <person name="Mack B.M."/>
            <person name="Wei Q."/>
            <person name="Uka V."/>
            <person name="De Saeger S."/>
            <person name="Diana Di Mavungu J."/>
        </authorList>
    </citation>
    <scope>FUNCTION</scope>
    <scope>DISRUPTION PHENOTYPE</scope>
    <scope>PATHWAY</scope>
</reference>
<dbReference type="EC" id="1.-.-.-" evidence="5"/>
<dbReference type="EMBL" id="EQ963473">
    <property type="protein sequence ID" value="EED55032.1"/>
    <property type="molecule type" value="Genomic_DNA"/>
</dbReference>
<dbReference type="RefSeq" id="XP_002373814.1">
    <property type="nucleotide sequence ID" value="XM_002373773.1"/>
</dbReference>
<dbReference type="SMR" id="B8N0E9"/>
<dbReference type="GlyCosmos" id="B8N0E9">
    <property type="glycosylation" value="4 sites, No reported glycans"/>
</dbReference>
<dbReference type="EnsemblFungi" id="EED55032">
    <property type="protein sequence ID" value="EED55032"/>
    <property type="gene ID" value="AFLA_023030"/>
</dbReference>
<dbReference type="VEuPathDB" id="FungiDB:AFLA_000139"/>
<dbReference type="eggNOG" id="KOG0156">
    <property type="taxonomic scope" value="Eukaryota"/>
</dbReference>
<dbReference type="HOGENOM" id="CLU_042557_2_0_1"/>
<dbReference type="OMA" id="VYRIWAG"/>
<dbReference type="GO" id="GO:0016020">
    <property type="term" value="C:membrane"/>
    <property type="evidence" value="ECO:0007669"/>
    <property type="project" value="UniProtKB-SubCell"/>
</dbReference>
<dbReference type="GO" id="GO:0020037">
    <property type="term" value="F:heme binding"/>
    <property type="evidence" value="ECO:0007669"/>
    <property type="project" value="InterPro"/>
</dbReference>
<dbReference type="GO" id="GO:0005506">
    <property type="term" value="F:iron ion binding"/>
    <property type="evidence" value="ECO:0007669"/>
    <property type="project" value="InterPro"/>
</dbReference>
<dbReference type="GO" id="GO:0004497">
    <property type="term" value="F:monooxygenase activity"/>
    <property type="evidence" value="ECO:0007669"/>
    <property type="project" value="UniProtKB-KW"/>
</dbReference>
<dbReference type="GO" id="GO:0016705">
    <property type="term" value="F:oxidoreductase activity, acting on paired donors, with incorporation or reduction of molecular oxygen"/>
    <property type="evidence" value="ECO:0007669"/>
    <property type="project" value="InterPro"/>
</dbReference>
<dbReference type="CDD" id="cd20615">
    <property type="entry name" value="CYP_GliC-like"/>
    <property type="match status" value="1"/>
</dbReference>
<dbReference type="Gene3D" id="1.10.630.10">
    <property type="entry name" value="Cytochrome P450"/>
    <property type="match status" value="1"/>
</dbReference>
<dbReference type="InterPro" id="IPR001128">
    <property type="entry name" value="Cyt_P450"/>
</dbReference>
<dbReference type="InterPro" id="IPR017972">
    <property type="entry name" value="Cyt_P450_CS"/>
</dbReference>
<dbReference type="InterPro" id="IPR002401">
    <property type="entry name" value="Cyt_P450_E_grp-I"/>
</dbReference>
<dbReference type="InterPro" id="IPR036396">
    <property type="entry name" value="Cyt_P450_sf"/>
</dbReference>
<dbReference type="PANTHER" id="PTHR24303:SF31">
    <property type="entry name" value="CYTOCHROME P450 307A1-RELATED"/>
    <property type="match status" value="1"/>
</dbReference>
<dbReference type="PANTHER" id="PTHR24303">
    <property type="entry name" value="HEME-BINDING MONOOXYGENASE FAMILY"/>
    <property type="match status" value="1"/>
</dbReference>
<dbReference type="Pfam" id="PF00067">
    <property type="entry name" value="p450"/>
    <property type="match status" value="1"/>
</dbReference>
<dbReference type="PRINTS" id="PR00463">
    <property type="entry name" value="EP450I"/>
</dbReference>
<dbReference type="PRINTS" id="PR00385">
    <property type="entry name" value="P450"/>
</dbReference>
<dbReference type="SUPFAM" id="SSF48264">
    <property type="entry name" value="Cytochrome P450"/>
    <property type="match status" value="1"/>
</dbReference>
<dbReference type="PROSITE" id="PS00086">
    <property type="entry name" value="CYTOCHROME_P450"/>
    <property type="match status" value="1"/>
</dbReference>
<feature type="chain" id="PRO_0000444456" description="Cytochrome P450 monooxygenase asaD">
    <location>
        <begin position="1"/>
        <end position="513"/>
    </location>
</feature>
<feature type="transmembrane region" description="Helical" evidence="2">
    <location>
        <begin position="14"/>
        <end position="34"/>
    </location>
</feature>
<feature type="binding site" description="axial binding residue" evidence="1">
    <location>
        <position position="461"/>
    </location>
    <ligand>
        <name>heme</name>
        <dbReference type="ChEBI" id="CHEBI:30413"/>
    </ligand>
    <ligandPart>
        <name>Fe</name>
        <dbReference type="ChEBI" id="CHEBI:18248"/>
    </ligandPart>
</feature>
<feature type="glycosylation site" description="N-linked (GlcNAc...) asparagine" evidence="3">
    <location>
        <position position="258"/>
    </location>
</feature>
<feature type="glycosylation site" description="N-linked (GlcNAc...) asparagine" evidence="3">
    <location>
        <position position="370"/>
    </location>
</feature>
<feature type="glycosylation site" description="N-linked (GlcNAc...) asparagine" evidence="3">
    <location>
        <position position="431"/>
    </location>
</feature>
<feature type="glycosylation site" description="N-linked (GlcNAc...) asparagine" evidence="3">
    <location>
        <position position="441"/>
    </location>
</feature>